<keyword id="KW-0066">ATP synthesis</keyword>
<keyword id="KW-0138">CF(0)</keyword>
<keyword id="KW-0375">Hydrogen ion transport</keyword>
<keyword id="KW-0406">Ion transport</keyword>
<keyword id="KW-0472">Membrane</keyword>
<keyword id="KW-1185">Reference proteome</keyword>
<keyword id="KW-0793">Thylakoid</keyword>
<keyword id="KW-0812">Transmembrane</keyword>
<keyword id="KW-1133">Transmembrane helix</keyword>
<keyword id="KW-0813">Transport</keyword>
<comment type="function">
    <text evidence="1">Key component of the proton channel; it plays a direct role in the translocation of protons across the membrane.</text>
</comment>
<comment type="subunit">
    <text evidence="1">F-type ATPases have 2 components, CF(1) - the catalytic core - and CF(0) - the membrane proton channel. CF(1) has five subunits: alpha(3), beta(3), gamma(1), delta(1), epsilon(1). CF(0) has four main subunits: a, b, b' and c.</text>
</comment>
<comment type="subcellular location">
    <subcellularLocation>
        <location evidence="1">Cellular thylakoid membrane</location>
        <topology evidence="1">Multi-pass membrane protein</topology>
    </subcellularLocation>
</comment>
<comment type="similarity">
    <text evidence="1">Belongs to the ATPase A chain family.</text>
</comment>
<feature type="chain" id="PRO_0000362488" description="ATP synthase subunit a">
    <location>
        <begin position="1"/>
        <end position="248"/>
    </location>
</feature>
<feature type="transmembrane region" description="Helical" evidence="1">
    <location>
        <begin position="31"/>
        <end position="51"/>
    </location>
</feature>
<feature type="transmembrane region" description="Helical" evidence="1">
    <location>
        <begin position="90"/>
        <end position="110"/>
    </location>
</feature>
<feature type="transmembrane region" description="Helical" evidence="1">
    <location>
        <begin position="129"/>
        <end position="149"/>
    </location>
</feature>
<feature type="transmembrane region" description="Helical" evidence="1">
    <location>
        <begin position="195"/>
        <end position="215"/>
    </location>
</feature>
<feature type="transmembrane region" description="Helical" evidence="1">
    <location>
        <begin position="216"/>
        <end position="236"/>
    </location>
</feature>
<proteinExistence type="inferred from homology"/>
<accession>Q2JIF4</accession>
<dbReference type="EMBL" id="CP000240">
    <property type="protein sequence ID" value="ABD03605.1"/>
    <property type="molecule type" value="Genomic_DNA"/>
</dbReference>
<dbReference type="RefSeq" id="WP_011434223.1">
    <property type="nucleotide sequence ID" value="NC_007776.1"/>
</dbReference>
<dbReference type="SMR" id="Q2JIF4"/>
<dbReference type="STRING" id="321332.CYB_2679"/>
<dbReference type="KEGG" id="cyb:CYB_2679"/>
<dbReference type="eggNOG" id="COG0356">
    <property type="taxonomic scope" value="Bacteria"/>
</dbReference>
<dbReference type="HOGENOM" id="CLU_041018_2_4_3"/>
<dbReference type="Proteomes" id="UP000001938">
    <property type="component" value="Chromosome"/>
</dbReference>
<dbReference type="GO" id="GO:0031676">
    <property type="term" value="C:plasma membrane-derived thylakoid membrane"/>
    <property type="evidence" value="ECO:0007669"/>
    <property type="project" value="UniProtKB-SubCell"/>
</dbReference>
<dbReference type="GO" id="GO:0045259">
    <property type="term" value="C:proton-transporting ATP synthase complex"/>
    <property type="evidence" value="ECO:0007669"/>
    <property type="project" value="UniProtKB-KW"/>
</dbReference>
<dbReference type="GO" id="GO:0046933">
    <property type="term" value="F:proton-transporting ATP synthase activity, rotational mechanism"/>
    <property type="evidence" value="ECO:0007669"/>
    <property type="project" value="UniProtKB-UniRule"/>
</dbReference>
<dbReference type="CDD" id="cd00310">
    <property type="entry name" value="ATP-synt_Fo_a_6"/>
    <property type="match status" value="1"/>
</dbReference>
<dbReference type="FunFam" id="1.20.120.220:FF:000001">
    <property type="entry name" value="ATP synthase subunit a, chloroplastic"/>
    <property type="match status" value="1"/>
</dbReference>
<dbReference type="Gene3D" id="1.20.120.220">
    <property type="entry name" value="ATP synthase, F0 complex, subunit A"/>
    <property type="match status" value="1"/>
</dbReference>
<dbReference type="HAMAP" id="MF_01393">
    <property type="entry name" value="ATP_synth_a_bact"/>
    <property type="match status" value="1"/>
</dbReference>
<dbReference type="InterPro" id="IPR045082">
    <property type="entry name" value="ATP_syn_F0_a_bact/chloroplast"/>
</dbReference>
<dbReference type="InterPro" id="IPR000568">
    <property type="entry name" value="ATP_synth_F0_asu"/>
</dbReference>
<dbReference type="InterPro" id="IPR023011">
    <property type="entry name" value="ATP_synth_F0_asu_AS"/>
</dbReference>
<dbReference type="InterPro" id="IPR035908">
    <property type="entry name" value="F0_ATP_A_sf"/>
</dbReference>
<dbReference type="NCBIfam" id="TIGR01131">
    <property type="entry name" value="ATP_synt_6_or_A"/>
    <property type="match status" value="1"/>
</dbReference>
<dbReference type="PANTHER" id="PTHR42823">
    <property type="entry name" value="ATP SYNTHASE SUBUNIT A, CHLOROPLASTIC"/>
    <property type="match status" value="1"/>
</dbReference>
<dbReference type="PANTHER" id="PTHR42823:SF3">
    <property type="entry name" value="ATP SYNTHASE SUBUNIT A, CHLOROPLASTIC"/>
    <property type="match status" value="1"/>
</dbReference>
<dbReference type="Pfam" id="PF00119">
    <property type="entry name" value="ATP-synt_A"/>
    <property type="match status" value="1"/>
</dbReference>
<dbReference type="PRINTS" id="PR00123">
    <property type="entry name" value="ATPASEA"/>
</dbReference>
<dbReference type="SUPFAM" id="SSF81336">
    <property type="entry name" value="F1F0 ATP synthase subunit A"/>
    <property type="match status" value="1"/>
</dbReference>
<dbReference type="PROSITE" id="PS00449">
    <property type="entry name" value="ATPASE_A"/>
    <property type="match status" value="1"/>
</dbReference>
<sequence length="248" mass="27477">MNLSFSSPPLLAELEVGHHLYWHLGKFTVHGQVLIASWIAIALILTVVILGTRQLQREPAGLQNFVEYALEFVQSIARAQIGEKNFRPWVPYVGTLFLFIFVSNWMGNLFPWKLIPLPEGELASPTNDINTTAGLALLTSIMYFVAGISKRGLSYFKKYIEPTPILLPINVLEDFTKPLSLSFRLFGNILAEELVIAVLVLLVPLFIPVPVMVLFLFTGAIQALIFSTLSAAYIGEALEGHGGGDHRD</sequence>
<evidence type="ECO:0000255" key="1">
    <source>
        <dbReference type="HAMAP-Rule" id="MF_01393"/>
    </source>
</evidence>
<name>ATP6_SYNJB</name>
<reference key="1">
    <citation type="journal article" date="2007" name="ISME J.">
        <title>Population level functional diversity in a microbial community revealed by comparative genomic and metagenomic analyses.</title>
        <authorList>
            <person name="Bhaya D."/>
            <person name="Grossman A.R."/>
            <person name="Steunou A.-S."/>
            <person name="Khuri N."/>
            <person name="Cohan F.M."/>
            <person name="Hamamura N."/>
            <person name="Melendrez M.C."/>
            <person name="Bateson M.M."/>
            <person name="Ward D.M."/>
            <person name="Heidelberg J.F."/>
        </authorList>
    </citation>
    <scope>NUCLEOTIDE SEQUENCE [LARGE SCALE GENOMIC DNA]</scope>
    <source>
        <strain>JA-2-3B'a(2-13)</strain>
    </source>
</reference>
<gene>
    <name evidence="1" type="primary">atpB</name>
    <name evidence="1" type="synonym">atpI</name>
    <name type="ordered locus">CYB_2679</name>
</gene>
<organism>
    <name type="scientific">Synechococcus sp. (strain JA-2-3B'a(2-13))</name>
    <name type="common">Cyanobacteria bacterium Yellowstone B-Prime</name>
    <dbReference type="NCBI Taxonomy" id="321332"/>
    <lineage>
        <taxon>Bacteria</taxon>
        <taxon>Bacillati</taxon>
        <taxon>Cyanobacteriota</taxon>
        <taxon>Cyanophyceae</taxon>
        <taxon>Synechococcales</taxon>
        <taxon>Synechococcaceae</taxon>
        <taxon>Synechococcus</taxon>
    </lineage>
</organism>
<protein>
    <recommendedName>
        <fullName evidence="1">ATP synthase subunit a</fullName>
    </recommendedName>
    <alternativeName>
        <fullName evidence="1">ATP synthase F0 sector subunit a</fullName>
    </alternativeName>
    <alternativeName>
        <fullName evidence="1">F-ATPase subunit 6</fullName>
    </alternativeName>
</protein>